<comment type="subcellular location">
    <subcellularLocation>
        <location evidence="2">Cell inner membrane</location>
        <topology evidence="2">Multi-pass membrane protein</topology>
    </subcellularLocation>
</comment>
<comment type="similarity">
    <text evidence="2">Belongs to the alanine or glycine:cation symporter (AGCS) (TC 2.A.25) family.</text>
</comment>
<keyword id="KW-0997">Cell inner membrane</keyword>
<keyword id="KW-1003">Cell membrane</keyword>
<keyword id="KW-0472">Membrane</keyword>
<keyword id="KW-1185">Reference proteome</keyword>
<keyword id="KW-0769">Symport</keyword>
<keyword id="KW-0812">Transmembrane</keyword>
<keyword id="KW-1133">Transmembrane helix</keyword>
<keyword id="KW-0813">Transport</keyword>
<accession>P44555</accession>
<protein>
    <recommendedName>
        <fullName>Uncharacterized transporter HI_0183</fullName>
    </recommendedName>
</protein>
<organism>
    <name type="scientific">Haemophilus influenzae (strain ATCC 51907 / DSM 11121 / KW20 / Rd)</name>
    <dbReference type="NCBI Taxonomy" id="71421"/>
    <lineage>
        <taxon>Bacteria</taxon>
        <taxon>Pseudomonadati</taxon>
        <taxon>Pseudomonadota</taxon>
        <taxon>Gammaproteobacteria</taxon>
        <taxon>Pasteurellales</taxon>
        <taxon>Pasteurellaceae</taxon>
        <taxon>Haemophilus</taxon>
    </lineage>
</organism>
<feature type="chain" id="PRO_0000161567" description="Uncharacterized transporter HI_0183">
    <location>
        <begin position="1"/>
        <end position="481"/>
    </location>
</feature>
<feature type="transmembrane region" description="Helical" evidence="1">
    <location>
        <begin position="30"/>
        <end position="50"/>
    </location>
</feature>
<feature type="transmembrane region" description="Helical" evidence="1">
    <location>
        <begin position="96"/>
        <end position="116"/>
    </location>
</feature>
<feature type="transmembrane region" description="Helical" evidence="1">
    <location>
        <begin position="154"/>
        <end position="174"/>
    </location>
</feature>
<feature type="transmembrane region" description="Helical" evidence="1">
    <location>
        <begin position="196"/>
        <end position="216"/>
    </location>
</feature>
<feature type="transmembrane region" description="Helical" evidence="1">
    <location>
        <begin position="220"/>
        <end position="240"/>
    </location>
</feature>
<feature type="transmembrane region" description="Helical" evidence="1">
    <location>
        <begin position="250"/>
        <end position="270"/>
    </location>
</feature>
<feature type="transmembrane region" description="Helical" evidence="1">
    <location>
        <begin position="311"/>
        <end position="331"/>
    </location>
</feature>
<feature type="transmembrane region" description="Helical" evidence="1">
    <location>
        <begin position="354"/>
        <end position="374"/>
    </location>
</feature>
<feature type="transmembrane region" description="Helical" evidence="1">
    <location>
        <begin position="391"/>
        <end position="411"/>
    </location>
</feature>
<feature type="transmembrane region" description="Helical" evidence="1">
    <location>
        <begin position="424"/>
        <end position="444"/>
    </location>
</feature>
<proteinExistence type="inferred from homology"/>
<dbReference type="EMBL" id="L42023">
    <property type="protein sequence ID" value="AAC21852.1"/>
    <property type="molecule type" value="Genomic_DNA"/>
</dbReference>
<dbReference type="PIR" id="I64144">
    <property type="entry name" value="I64144"/>
</dbReference>
<dbReference type="RefSeq" id="NP_438351.1">
    <property type="nucleotide sequence ID" value="NC_000907.1"/>
</dbReference>
<dbReference type="SMR" id="P44555"/>
<dbReference type="STRING" id="71421.HI_0183"/>
<dbReference type="EnsemblBacteria" id="AAC21852">
    <property type="protein sequence ID" value="AAC21852"/>
    <property type="gene ID" value="HI_0183"/>
</dbReference>
<dbReference type="KEGG" id="hin:HI_0183"/>
<dbReference type="PATRIC" id="fig|71421.8.peg.187"/>
<dbReference type="eggNOG" id="COG1115">
    <property type="taxonomic scope" value="Bacteria"/>
</dbReference>
<dbReference type="HOGENOM" id="CLU_024867_0_1_6"/>
<dbReference type="OrthoDB" id="9806926at2"/>
<dbReference type="PhylomeDB" id="P44555"/>
<dbReference type="BioCyc" id="HINF71421:G1GJ1-193-MONOMER"/>
<dbReference type="Proteomes" id="UP000000579">
    <property type="component" value="Chromosome"/>
</dbReference>
<dbReference type="GO" id="GO:0005886">
    <property type="term" value="C:plasma membrane"/>
    <property type="evidence" value="ECO:0000318"/>
    <property type="project" value="GO_Central"/>
</dbReference>
<dbReference type="GO" id="GO:0005283">
    <property type="term" value="F:amino acid:sodium symporter activity"/>
    <property type="evidence" value="ECO:0007669"/>
    <property type="project" value="InterPro"/>
</dbReference>
<dbReference type="FunFam" id="1.20.1740.10:FF:000004">
    <property type="entry name" value="Sodium:alanine symporter family protein"/>
    <property type="match status" value="1"/>
</dbReference>
<dbReference type="Gene3D" id="1.20.1740.10">
    <property type="entry name" value="Amino acid/polyamine transporter I"/>
    <property type="match status" value="1"/>
</dbReference>
<dbReference type="InterPro" id="IPR001463">
    <property type="entry name" value="Na/Ala_symport"/>
</dbReference>
<dbReference type="NCBIfam" id="TIGR00835">
    <property type="entry name" value="agcS"/>
    <property type="match status" value="1"/>
</dbReference>
<dbReference type="PANTHER" id="PTHR30330">
    <property type="entry name" value="AGSS FAMILY TRANSPORTER, SODIUM-ALANINE"/>
    <property type="match status" value="1"/>
</dbReference>
<dbReference type="PANTHER" id="PTHR30330:SF1">
    <property type="entry name" value="AMINO-ACID CARRIER PROTEIN ALST"/>
    <property type="match status" value="1"/>
</dbReference>
<dbReference type="Pfam" id="PF01235">
    <property type="entry name" value="Na_Ala_symp"/>
    <property type="match status" value="1"/>
</dbReference>
<dbReference type="PRINTS" id="PR00175">
    <property type="entry name" value="NAALASMPORT"/>
</dbReference>
<dbReference type="PROSITE" id="PS00873">
    <property type="entry name" value="NA_ALANINE_SYMP"/>
    <property type="match status" value="1"/>
</dbReference>
<name>Y183_HAEIN</name>
<sequence>MIMEFEFSKMLEEVLTWIVAHLDGPLWDATIIILLGTGLFFTITTGFVQFRLFPASLREMWFGRSVEGSSLTPFQAFTTGLASRVGVGNIGGVATAIALGGEGAVFWMWVTAFIGMSSAFAESTLAQLFKIQDKDGSFRGGPAYYIVQGLKSRCMAVAFALALIFTFGFAFNSVQANSIVEATSNAWNWKGEYVGISLVIFTALIIFGGVKRIAIISSNLVPMMALFYLIMAVIILGMHIDMIPSVIHRIVQSAFSFDAAAGGMFGALVSKAMMMGIKRGLFSNEAGMGSAPNSAAAAHVKHPVSQGLVQMLGVFVDTMIVCTCTAVIILLSNNYGSETLKSISLTQNALQYHIGEFGAHFLAFILLLFAYSSIIGNYAYAESNIRFIKNKPWLVLLFRLMVLFFVYFGAVRSGNVVWNFADTVMAVMAIINLIAILMLSPIVWKLMKDYQRQLKEGKTPEFKIDEYPELRKKIFDSRIWK</sequence>
<reference key="1">
    <citation type="journal article" date="1995" name="Science">
        <title>Whole-genome random sequencing and assembly of Haemophilus influenzae Rd.</title>
        <authorList>
            <person name="Fleischmann R.D."/>
            <person name="Adams M.D."/>
            <person name="White O."/>
            <person name="Clayton R.A."/>
            <person name="Kirkness E.F."/>
            <person name="Kerlavage A.R."/>
            <person name="Bult C.J."/>
            <person name="Tomb J.-F."/>
            <person name="Dougherty B.A."/>
            <person name="Merrick J.M."/>
            <person name="McKenney K."/>
            <person name="Sutton G.G."/>
            <person name="FitzHugh W."/>
            <person name="Fields C.A."/>
            <person name="Gocayne J.D."/>
            <person name="Scott J.D."/>
            <person name="Shirley R."/>
            <person name="Liu L.-I."/>
            <person name="Glodek A."/>
            <person name="Kelley J.M."/>
            <person name="Weidman J.F."/>
            <person name="Phillips C.A."/>
            <person name="Spriggs T."/>
            <person name="Hedblom E."/>
            <person name="Cotton M.D."/>
            <person name="Utterback T.R."/>
            <person name="Hanna M.C."/>
            <person name="Nguyen D.T."/>
            <person name="Saudek D.M."/>
            <person name="Brandon R.C."/>
            <person name="Fine L.D."/>
            <person name="Fritchman J.L."/>
            <person name="Fuhrmann J.L."/>
            <person name="Geoghagen N.S.M."/>
            <person name="Gnehm C.L."/>
            <person name="McDonald L.A."/>
            <person name="Small K.V."/>
            <person name="Fraser C.M."/>
            <person name="Smith H.O."/>
            <person name="Venter J.C."/>
        </authorList>
    </citation>
    <scope>NUCLEOTIDE SEQUENCE [LARGE SCALE GENOMIC DNA]</scope>
    <source>
        <strain>ATCC 51907 / DSM 11121 / KW20 / Rd</strain>
    </source>
</reference>
<gene>
    <name type="ordered locus">HI_0183</name>
</gene>
<evidence type="ECO:0000255" key="1"/>
<evidence type="ECO:0000305" key="2"/>